<proteinExistence type="inferred from homology"/>
<keyword id="KW-0240">DNA-directed RNA polymerase</keyword>
<keyword id="KW-0460">Magnesium</keyword>
<keyword id="KW-0479">Metal-binding</keyword>
<keyword id="KW-0548">Nucleotidyltransferase</keyword>
<keyword id="KW-1185">Reference proteome</keyword>
<keyword id="KW-0804">Transcription</keyword>
<keyword id="KW-0808">Transferase</keyword>
<keyword id="KW-0862">Zinc</keyword>
<evidence type="ECO:0000255" key="1">
    <source>
        <dbReference type="HAMAP-Rule" id="MF_01322"/>
    </source>
</evidence>
<evidence type="ECO:0000256" key="2">
    <source>
        <dbReference type="SAM" id="MobiDB-lite"/>
    </source>
</evidence>
<comment type="function">
    <text evidence="1">DNA-dependent RNA polymerase catalyzes the transcription of DNA into RNA using the four ribonucleoside triphosphates as substrates.</text>
</comment>
<comment type="catalytic activity">
    <reaction evidence="1">
        <text>RNA(n) + a ribonucleoside 5'-triphosphate = RNA(n+1) + diphosphate</text>
        <dbReference type="Rhea" id="RHEA:21248"/>
        <dbReference type="Rhea" id="RHEA-COMP:14527"/>
        <dbReference type="Rhea" id="RHEA-COMP:17342"/>
        <dbReference type="ChEBI" id="CHEBI:33019"/>
        <dbReference type="ChEBI" id="CHEBI:61557"/>
        <dbReference type="ChEBI" id="CHEBI:140395"/>
        <dbReference type="EC" id="2.7.7.6"/>
    </reaction>
</comment>
<comment type="cofactor">
    <cofactor evidence="1">
        <name>Mg(2+)</name>
        <dbReference type="ChEBI" id="CHEBI:18420"/>
    </cofactor>
    <text evidence="1">Binds 1 Mg(2+) ion per subunit.</text>
</comment>
<comment type="cofactor">
    <cofactor evidence="1">
        <name>Zn(2+)</name>
        <dbReference type="ChEBI" id="CHEBI:29105"/>
    </cofactor>
    <text evidence="1">Binds 2 Zn(2+) ions per subunit.</text>
</comment>
<comment type="subunit">
    <text evidence="1">The RNAP catalytic core consists of 2 alpha, 1 beta, 1 beta' and 1 omega subunit. When a sigma factor is associated with the core the holoenzyme is formed, which can initiate transcription.</text>
</comment>
<comment type="similarity">
    <text evidence="1">Belongs to the RNA polymerase beta' chain family.</text>
</comment>
<reference key="1">
    <citation type="journal article" date="2011" name="Stand. Genomic Sci.">
        <title>Complete genome sequence of the halophilic and highly halotolerant Chromohalobacter salexigens type strain (1H11(T)).</title>
        <authorList>
            <person name="Copeland A."/>
            <person name="O'Connor K."/>
            <person name="Lucas S."/>
            <person name="Lapidus A."/>
            <person name="Berry K.W."/>
            <person name="Detter J.C."/>
            <person name="Del Rio T.G."/>
            <person name="Hammon N."/>
            <person name="Dalin E."/>
            <person name="Tice H."/>
            <person name="Pitluck S."/>
            <person name="Bruce D."/>
            <person name="Goodwin L."/>
            <person name="Han C."/>
            <person name="Tapia R."/>
            <person name="Saunders E."/>
            <person name="Schmutz J."/>
            <person name="Brettin T."/>
            <person name="Larimer F."/>
            <person name="Land M."/>
            <person name="Hauser L."/>
            <person name="Vargas C."/>
            <person name="Nieto J.J."/>
            <person name="Kyrpides N.C."/>
            <person name="Ivanova N."/>
            <person name="Goker M."/>
            <person name="Klenk H.P."/>
            <person name="Csonka L.N."/>
            <person name="Woyke T."/>
        </authorList>
    </citation>
    <scope>NUCLEOTIDE SEQUENCE [LARGE SCALE GENOMIC DNA]</scope>
    <source>
        <strain>ATCC BAA-138 / DSM 3043 / CIP 106854 / NCIMB 13768 / 1H11</strain>
    </source>
</reference>
<dbReference type="EC" id="2.7.7.6" evidence="1"/>
<dbReference type="EMBL" id="CP000285">
    <property type="protein sequence ID" value="ABE57777.1"/>
    <property type="molecule type" value="Genomic_DNA"/>
</dbReference>
<dbReference type="RefSeq" id="WP_011505723.1">
    <property type="nucleotide sequence ID" value="NC_007963.1"/>
</dbReference>
<dbReference type="SMR" id="Q1R0I1"/>
<dbReference type="STRING" id="290398.Csal_0415"/>
<dbReference type="GeneID" id="95333168"/>
<dbReference type="KEGG" id="csa:Csal_0415"/>
<dbReference type="eggNOG" id="COG0086">
    <property type="taxonomic scope" value="Bacteria"/>
</dbReference>
<dbReference type="HOGENOM" id="CLU_000524_3_1_6"/>
<dbReference type="OrthoDB" id="9815296at2"/>
<dbReference type="Proteomes" id="UP000000239">
    <property type="component" value="Chromosome"/>
</dbReference>
<dbReference type="GO" id="GO:0000428">
    <property type="term" value="C:DNA-directed RNA polymerase complex"/>
    <property type="evidence" value="ECO:0007669"/>
    <property type="project" value="UniProtKB-KW"/>
</dbReference>
<dbReference type="GO" id="GO:0003677">
    <property type="term" value="F:DNA binding"/>
    <property type="evidence" value="ECO:0007669"/>
    <property type="project" value="UniProtKB-UniRule"/>
</dbReference>
<dbReference type="GO" id="GO:0003899">
    <property type="term" value="F:DNA-directed RNA polymerase activity"/>
    <property type="evidence" value="ECO:0007669"/>
    <property type="project" value="UniProtKB-UniRule"/>
</dbReference>
<dbReference type="GO" id="GO:0000287">
    <property type="term" value="F:magnesium ion binding"/>
    <property type="evidence" value="ECO:0007669"/>
    <property type="project" value="UniProtKB-UniRule"/>
</dbReference>
<dbReference type="GO" id="GO:0008270">
    <property type="term" value="F:zinc ion binding"/>
    <property type="evidence" value="ECO:0007669"/>
    <property type="project" value="UniProtKB-UniRule"/>
</dbReference>
<dbReference type="GO" id="GO:0006351">
    <property type="term" value="P:DNA-templated transcription"/>
    <property type="evidence" value="ECO:0007669"/>
    <property type="project" value="UniProtKB-UniRule"/>
</dbReference>
<dbReference type="CDD" id="cd02655">
    <property type="entry name" value="RNAP_beta'_C"/>
    <property type="match status" value="1"/>
</dbReference>
<dbReference type="CDD" id="cd01609">
    <property type="entry name" value="RNAP_beta'_N"/>
    <property type="match status" value="1"/>
</dbReference>
<dbReference type="FunFam" id="1.10.132.30:FF:000003">
    <property type="entry name" value="DNA-directed RNA polymerase subunit beta"/>
    <property type="match status" value="1"/>
</dbReference>
<dbReference type="FunFam" id="1.10.150.390:FF:000002">
    <property type="entry name" value="DNA-directed RNA polymerase subunit beta"/>
    <property type="match status" value="1"/>
</dbReference>
<dbReference type="FunFam" id="4.10.860.120:FF:000001">
    <property type="entry name" value="DNA-directed RNA polymerase subunit beta"/>
    <property type="match status" value="1"/>
</dbReference>
<dbReference type="Gene3D" id="1.10.132.30">
    <property type="match status" value="1"/>
</dbReference>
<dbReference type="Gene3D" id="1.10.150.390">
    <property type="match status" value="1"/>
</dbReference>
<dbReference type="Gene3D" id="1.10.1790.20">
    <property type="match status" value="1"/>
</dbReference>
<dbReference type="Gene3D" id="1.10.40.90">
    <property type="match status" value="1"/>
</dbReference>
<dbReference type="Gene3D" id="2.40.40.20">
    <property type="match status" value="1"/>
</dbReference>
<dbReference type="Gene3D" id="2.40.50.100">
    <property type="match status" value="3"/>
</dbReference>
<dbReference type="Gene3D" id="4.10.860.120">
    <property type="entry name" value="RNA polymerase II, clamp domain"/>
    <property type="match status" value="1"/>
</dbReference>
<dbReference type="Gene3D" id="1.10.274.100">
    <property type="entry name" value="RNA polymerase Rpb1, domain 3"/>
    <property type="match status" value="1"/>
</dbReference>
<dbReference type="HAMAP" id="MF_01322">
    <property type="entry name" value="RNApol_bact_RpoC"/>
    <property type="match status" value="1"/>
</dbReference>
<dbReference type="InterPro" id="IPR045867">
    <property type="entry name" value="DNA-dir_RpoC_beta_prime"/>
</dbReference>
<dbReference type="InterPro" id="IPR012754">
    <property type="entry name" value="DNA-dir_RpoC_beta_prime_bact"/>
</dbReference>
<dbReference type="InterPro" id="IPR000722">
    <property type="entry name" value="RNA_pol_asu"/>
</dbReference>
<dbReference type="InterPro" id="IPR006592">
    <property type="entry name" value="RNA_pol_N"/>
</dbReference>
<dbReference type="InterPro" id="IPR007080">
    <property type="entry name" value="RNA_pol_Rpb1_1"/>
</dbReference>
<dbReference type="InterPro" id="IPR007066">
    <property type="entry name" value="RNA_pol_Rpb1_3"/>
</dbReference>
<dbReference type="InterPro" id="IPR042102">
    <property type="entry name" value="RNA_pol_Rpb1_3_sf"/>
</dbReference>
<dbReference type="InterPro" id="IPR007083">
    <property type="entry name" value="RNA_pol_Rpb1_4"/>
</dbReference>
<dbReference type="InterPro" id="IPR007081">
    <property type="entry name" value="RNA_pol_Rpb1_5"/>
</dbReference>
<dbReference type="InterPro" id="IPR044893">
    <property type="entry name" value="RNA_pol_Rpb1_clamp_domain"/>
</dbReference>
<dbReference type="InterPro" id="IPR038120">
    <property type="entry name" value="Rpb1_funnel_sf"/>
</dbReference>
<dbReference type="NCBIfam" id="TIGR02386">
    <property type="entry name" value="rpoC_TIGR"/>
    <property type="match status" value="1"/>
</dbReference>
<dbReference type="PANTHER" id="PTHR19376">
    <property type="entry name" value="DNA-DIRECTED RNA POLYMERASE"/>
    <property type="match status" value="1"/>
</dbReference>
<dbReference type="PANTHER" id="PTHR19376:SF54">
    <property type="entry name" value="DNA-DIRECTED RNA POLYMERASE SUBUNIT BETA"/>
    <property type="match status" value="1"/>
</dbReference>
<dbReference type="Pfam" id="PF04997">
    <property type="entry name" value="RNA_pol_Rpb1_1"/>
    <property type="match status" value="1"/>
</dbReference>
<dbReference type="Pfam" id="PF00623">
    <property type="entry name" value="RNA_pol_Rpb1_2"/>
    <property type="match status" value="2"/>
</dbReference>
<dbReference type="Pfam" id="PF04983">
    <property type="entry name" value="RNA_pol_Rpb1_3"/>
    <property type="match status" value="1"/>
</dbReference>
<dbReference type="Pfam" id="PF05000">
    <property type="entry name" value="RNA_pol_Rpb1_4"/>
    <property type="match status" value="1"/>
</dbReference>
<dbReference type="Pfam" id="PF04998">
    <property type="entry name" value="RNA_pol_Rpb1_5"/>
    <property type="match status" value="2"/>
</dbReference>
<dbReference type="SMART" id="SM00663">
    <property type="entry name" value="RPOLA_N"/>
    <property type="match status" value="1"/>
</dbReference>
<dbReference type="SUPFAM" id="SSF64484">
    <property type="entry name" value="beta and beta-prime subunits of DNA dependent RNA-polymerase"/>
    <property type="match status" value="1"/>
</dbReference>
<sequence>MKDLVKVLKSQAQSEEFDAIKITLASPDMIRSWSYGEVKKPETINYRTFKPERDGLFCAKIFGPVKDYECLCGKYKRMKHRGIICEKCGVEVTKAAVRRERMGHIELAAPVAHIWFLKSLPSRIGMFLDMTLRDIERVLYFESFMVIDPGMTTLERGQLLNDEQYFEALEEFGDDFDARMGAEAVQALLNDVDLDEEIERLREEIPQTNSETKIKKLSKRLKLLEAFQKSGNDPAWMIMEVLPVLPPDLRPLVPLDGGRFATSDLNDLYRRVINRNNRLKRLLDLNAPDIIVRNEKRMLQESVDALLDNGRRGRAITGSNKRPLKSLADMIKGKQGRFRQNLLGKRVDYSGRSVITVGPTLRLHQCGLPKKMALELFKPFIYSKLQAGGQASTIKAAKKMVERELPEVWDILADVIREHPVLLNRAPTLHRLGIQAFEPLLIEGKAIQLHPLVCAAYNADFDGDQMAVHVPLTLEAQLESRTLMMATNNVLSPANGEPIIVPSQDVVLGLYYMTREKIGAPGEGMVFSNLDEVERAFGTQSVSLHARVKVRLTEYDRDEDGGEWTSSTKIHDTTVGRALLYRILPKGMPFELVDQPMKKKAISGLINAVYRRSGLKDTVIFADQLMYTGFRLATWSGASIGVNDFVIPDSKKEIVDGAEEEVKEIENQFSSGLVTAGEKYNKVIDIWSKANDKVAKAMMAGISKETAIDREGNEVEQDSFNSVFIMADSGARGSAAQIRQLAGMRGLMAKPDGSIIETPITANFREGLNVLQYFISTHGARKGLADTALKTANSGYLTRRLVDVSQDLVITEEDCGTEDGLTLHPVIEGGDVIVSLAQRVLGRVVAQDVVDPATDDVLIARGTLLDEAWCARLDTMGVDEIVVRSAITCETAHGVCSACYGRDLARGHQVNVGEAVGVIAAQSIGEPGTQLTMRTFHIGGAASRASAVDSVQVKHGGTVRLHNIKHVERSDGKLVVVSRSSALAVADEHGREREYYKLPYGAELSVRDGDMVEAGTPVAKWDPHTHPVVAEVEGKVQFSDMEEGLTIHRSVDEMTGLSNIEVIESASRPASGRDKRPMIMLLDENGGHVTLPGSNTPVQYMLPGKAIISVENGGQVGVGEVIARIPVEASGNKDITGGLPRVADLFEARKPKEPAILAEVTGTISFGKETKGKRRLTITPEEGDPLEMLIPKWRQIGVFEGETVEKGEVISDGPSNPHDILRLLGVAELAKYITAEIQDVYRLQGVVIDDKHIEVIVRQMLRKVEITDSGDSSFITGDQVEFVRVLEENQRLAQEDKFPAKYDRLLLGITKASLATESFISAASFQETTRVLTEAAVTGKRDYLRGLKENVVVGRLVPAGTGLAHHAERRRRREDPESTANPSAFDVEQELGAQLTALDAEDDDL</sequence>
<accession>Q1R0I1</accession>
<organism>
    <name type="scientific">Chromohalobacter salexigens (strain ATCC BAA-138 / DSM 3043 / CIP 106854 / NCIMB 13768 / 1H11)</name>
    <dbReference type="NCBI Taxonomy" id="290398"/>
    <lineage>
        <taxon>Bacteria</taxon>
        <taxon>Pseudomonadati</taxon>
        <taxon>Pseudomonadota</taxon>
        <taxon>Gammaproteobacteria</taxon>
        <taxon>Oceanospirillales</taxon>
        <taxon>Halomonadaceae</taxon>
        <taxon>Chromohalobacter</taxon>
    </lineage>
</organism>
<feature type="chain" id="PRO_0000308828" description="DNA-directed RNA polymerase subunit beta'">
    <location>
        <begin position="1"/>
        <end position="1405"/>
    </location>
</feature>
<feature type="region of interest" description="Disordered" evidence="2">
    <location>
        <begin position="1363"/>
        <end position="1388"/>
    </location>
</feature>
<feature type="binding site" evidence="1">
    <location>
        <position position="70"/>
    </location>
    <ligand>
        <name>Zn(2+)</name>
        <dbReference type="ChEBI" id="CHEBI:29105"/>
        <label>1</label>
    </ligand>
</feature>
<feature type="binding site" evidence="1">
    <location>
        <position position="72"/>
    </location>
    <ligand>
        <name>Zn(2+)</name>
        <dbReference type="ChEBI" id="CHEBI:29105"/>
        <label>1</label>
    </ligand>
</feature>
<feature type="binding site" evidence="1">
    <location>
        <position position="85"/>
    </location>
    <ligand>
        <name>Zn(2+)</name>
        <dbReference type="ChEBI" id="CHEBI:29105"/>
        <label>1</label>
    </ligand>
</feature>
<feature type="binding site" evidence="1">
    <location>
        <position position="88"/>
    </location>
    <ligand>
        <name>Zn(2+)</name>
        <dbReference type="ChEBI" id="CHEBI:29105"/>
        <label>1</label>
    </ligand>
</feature>
<feature type="binding site" evidence="1">
    <location>
        <position position="460"/>
    </location>
    <ligand>
        <name>Mg(2+)</name>
        <dbReference type="ChEBI" id="CHEBI:18420"/>
    </ligand>
</feature>
<feature type="binding site" evidence="1">
    <location>
        <position position="462"/>
    </location>
    <ligand>
        <name>Mg(2+)</name>
        <dbReference type="ChEBI" id="CHEBI:18420"/>
    </ligand>
</feature>
<feature type="binding site" evidence="1">
    <location>
        <position position="464"/>
    </location>
    <ligand>
        <name>Mg(2+)</name>
        <dbReference type="ChEBI" id="CHEBI:18420"/>
    </ligand>
</feature>
<feature type="binding site" evidence="1">
    <location>
        <position position="815"/>
    </location>
    <ligand>
        <name>Zn(2+)</name>
        <dbReference type="ChEBI" id="CHEBI:29105"/>
        <label>2</label>
    </ligand>
</feature>
<feature type="binding site" evidence="1">
    <location>
        <position position="889"/>
    </location>
    <ligand>
        <name>Zn(2+)</name>
        <dbReference type="ChEBI" id="CHEBI:29105"/>
        <label>2</label>
    </ligand>
</feature>
<feature type="binding site" evidence="1">
    <location>
        <position position="896"/>
    </location>
    <ligand>
        <name>Zn(2+)</name>
        <dbReference type="ChEBI" id="CHEBI:29105"/>
        <label>2</label>
    </ligand>
</feature>
<feature type="binding site" evidence="1">
    <location>
        <position position="899"/>
    </location>
    <ligand>
        <name>Zn(2+)</name>
        <dbReference type="ChEBI" id="CHEBI:29105"/>
        <label>2</label>
    </ligand>
</feature>
<protein>
    <recommendedName>
        <fullName evidence="1">DNA-directed RNA polymerase subunit beta'</fullName>
        <shortName evidence="1">RNAP subunit beta'</shortName>
        <ecNumber evidence="1">2.7.7.6</ecNumber>
    </recommendedName>
    <alternativeName>
        <fullName evidence="1">RNA polymerase subunit beta'</fullName>
    </alternativeName>
    <alternativeName>
        <fullName evidence="1">Transcriptase subunit beta'</fullName>
    </alternativeName>
</protein>
<name>RPOC_CHRSD</name>
<gene>
    <name evidence="1" type="primary">rpoC</name>
    <name type="ordered locus">Csal_0415</name>
</gene>